<gene>
    <name evidence="1" type="primary">ureF</name>
    <name type="ordered locus">Ava_4635</name>
</gene>
<organism>
    <name type="scientific">Trichormus variabilis (strain ATCC 29413 / PCC 7937)</name>
    <name type="common">Anabaena variabilis</name>
    <dbReference type="NCBI Taxonomy" id="240292"/>
    <lineage>
        <taxon>Bacteria</taxon>
        <taxon>Bacillati</taxon>
        <taxon>Cyanobacteriota</taxon>
        <taxon>Cyanophyceae</taxon>
        <taxon>Nostocales</taxon>
        <taxon>Nostocaceae</taxon>
        <taxon>Trichormus</taxon>
    </lineage>
</organism>
<comment type="function">
    <text evidence="1">Required for maturation of urease via the functional incorporation of the urease nickel metallocenter.</text>
</comment>
<comment type="subunit">
    <text evidence="1">UreD, UreF and UreG form a complex that acts as a GTP-hydrolysis-dependent molecular chaperone, activating the urease apoprotein by helping to assemble the nickel containing metallocenter of UreC. The UreE protein probably delivers the nickel.</text>
</comment>
<comment type="subcellular location">
    <subcellularLocation>
        <location evidence="1">Cytoplasm</location>
    </subcellularLocation>
</comment>
<comment type="similarity">
    <text evidence="1">Belongs to the UreF family.</text>
</comment>
<proteinExistence type="inferred from homology"/>
<feature type="chain" id="PRO_0000344071" description="Urease accessory protein UreF">
    <location>
        <begin position="1"/>
        <end position="229"/>
    </location>
</feature>
<accession>Q3M454</accession>
<protein>
    <recommendedName>
        <fullName evidence="1">Urease accessory protein UreF</fullName>
    </recommendedName>
</protein>
<evidence type="ECO:0000255" key="1">
    <source>
        <dbReference type="HAMAP-Rule" id="MF_01385"/>
    </source>
</evidence>
<keyword id="KW-0143">Chaperone</keyword>
<keyword id="KW-0963">Cytoplasm</keyword>
<keyword id="KW-0996">Nickel insertion</keyword>
<sequence>MDTITLTDHHFLHILQLASSALPVGAYSYSEGLETLVESGTITSQSTLQQWLEAELSYGAIRLEAAVMVRSYQATIMGEMETLRYWNLWLSAARETQELRNSSWQMGRSLMQLLGKIQPEILSLANSVGNPCNYAIAFAIASAHWQVNIQAALLAYLHSWATNLITAGVKLIPLGQTAGQELLLQLQPLISHATVEIMSLKDDELSCCSWGLSLASMQHETQYTRLFRS</sequence>
<reference key="1">
    <citation type="journal article" date="2014" name="Stand. Genomic Sci.">
        <title>Complete genome sequence of Anabaena variabilis ATCC 29413.</title>
        <authorList>
            <person name="Thiel T."/>
            <person name="Pratte B.S."/>
            <person name="Zhong J."/>
            <person name="Goodwin L."/>
            <person name="Copeland A."/>
            <person name="Lucas S."/>
            <person name="Han C."/>
            <person name="Pitluck S."/>
            <person name="Land M.L."/>
            <person name="Kyrpides N.C."/>
            <person name="Woyke T."/>
        </authorList>
    </citation>
    <scope>NUCLEOTIDE SEQUENCE [LARGE SCALE GENOMIC DNA]</scope>
    <source>
        <strain>ATCC 29413 / PCC 7937</strain>
    </source>
</reference>
<name>UREF_TRIV2</name>
<dbReference type="EMBL" id="CP000117">
    <property type="protein sequence ID" value="ABA24232.1"/>
    <property type="molecule type" value="Genomic_DNA"/>
</dbReference>
<dbReference type="SMR" id="Q3M454"/>
<dbReference type="STRING" id="240292.Ava_4635"/>
<dbReference type="KEGG" id="ava:Ava_4635"/>
<dbReference type="eggNOG" id="COG0830">
    <property type="taxonomic scope" value="Bacteria"/>
</dbReference>
<dbReference type="HOGENOM" id="CLU_049215_2_1_3"/>
<dbReference type="Proteomes" id="UP000002533">
    <property type="component" value="Chromosome"/>
</dbReference>
<dbReference type="GO" id="GO:0005737">
    <property type="term" value="C:cytoplasm"/>
    <property type="evidence" value="ECO:0007669"/>
    <property type="project" value="UniProtKB-SubCell"/>
</dbReference>
<dbReference type="GO" id="GO:0016151">
    <property type="term" value="F:nickel cation binding"/>
    <property type="evidence" value="ECO:0007669"/>
    <property type="project" value="UniProtKB-UniRule"/>
</dbReference>
<dbReference type="Gene3D" id="1.10.4190.10">
    <property type="entry name" value="Urease accessory protein UreF"/>
    <property type="match status" value="1"/>
</dbReference>
<dbReference type="HAMAP" id="MF_01385">
    <property type="entry name" value="UreF"/>
    <property type="match status" value="1"/>
</dbReference>
<dbReference type="InterPro" id="IPR002639">
    <property type="entry name" value="UreF"/>
</dbReference>
<dbReference type="InterPro" id="IPR038277">
    <property type="entry name" value="UreF_sf"/>
</dbReference>
<dbReference type="PANTHER" id="PTHR33620">
    <property type="entry name" value="UREASE ACCESSORY PROTEIN F"/>
    <property type="match status" value="1"/>
</dbReference>
<dbReference type="PANTHER" id="PTHR33620:SF1">
    <property type="entry name" value="UREASE ACCESSORY PROTEIN F"/>
    <property type="match status" value="1"/>
</dbReference>
<dbReference type="Pfam" id="PF01730">
    <property type="entry name" value="UreF"/>
    <property type="match status" value="1"/>
</dbReference>
<dbReference type="PIRSF" id="PIRSF009467">
    <property type="entry name" value="Ureas_acces_UreF"/>
    <property type="match status" value="1"/>
</dbReference>